<keyword id="KW-0150">Chloroplast</keyword>
<keyword id="KW-0934">Plastid</keyword>
<keyword id="KW-0687">Ribonucleoprotein</keyword>
<keyword id="KW-0689">Ribosomal protein</keyword>
<keyword id="KW-0694">RNA-binding</keyword>
<keyword id="KW-0699">rRNA-binding</keyword>
<comment type="function">
    <text evidence="1">One of the primary rRNA binding proteins, it binds directly near the 3'-end of the 23S rRNA, where it nucleates assembly of the 50S subunit.</text>
</comment>
<comment type="subunit">
    <text>Part of the 50S ribosomal subunit.</text>
</comment>
<comment type="subcellular location">
    <subcellularLocation>
        <location>Plastid</location>
        <location>Chloroplast</location>
    </subcellularLocation>
</comment>
<comment type="similarity">
    <text evidence="3">Belongs to the universal ribosomal protein uL3 family.</text>
</comment>
<sequence>MKIGLLGKKIGMTQIFDPGGKALPVTILKLGPCLITDIKKMESHGYAAIQIGYVKVNGNKLNKAQIGHLNKYNMPLVKFLKEYKVASTENYQIGKWITVEDLSINQNISVSGTSIGKGFTGCIKRHNFSRGPMSHGSKNHRQPGSIGAGTTPGKVFAGKKMAGRMGGKKVTIQNLKIIDIKINNNLIIVKGSVPGKPGNIVSIYQ</sequence>
<organism>
    <name type="scientific">Gracilaria tenuistipitata var. liui</name>
    <name type="common">Red alga</name>
    <dbReference type="NCBI Taxonomy" id="285951"/>
    <lineage>
        <taxon>Eukaryota</taxon>
        <taxon>Rhodophyta</taxon>
        <taxon>Florideophyceae</taxon>
        <taxon>Rhodymeniophycidae</taxon>
        <taxon>Gracilariales</taxon>
        <taxon>Gracilariaceae</taxon>
        <taxon>Gracilaria</taxon>
        <taxon>Gracilaria tenuistipitata</taxon>
    </lineage>
</organism>
<evidence type="ECO:0000250" key="1"/>
<evidence type="ECO:0000256" key="2">
    <source>
        <dbReference type="SAM" id="MobiDB-lite"/>
    </source>
</evidence>
<evidence type="ECO:0000305" key="3"/>
<reference key="1">
    <citation type="journal article" date="2004" name="J. Mol. Evol.">
        <title>Comparative analysis of the complete plastid genome sequence of the red alga Gracilaria tenuistipitata var. liui provides insights into the evolution of rhodoplasts and their relationship to other plastids.</title>
        <authorList>
            <person name="Hagopian J.C."/>
            <person name="Reis M."/>
            <person name="Kitajima J.P."/>
            <person name="Bhattacharya D."/>
            <person name="de Oliveira M.C."/>
        </authorList>
    </citation>
    <scope>NUCLEOTIDE SEQUENCE [LARGE SCALE GENOMIC DNA]</scope>
</reference>
<gene>
    <name type="primary">rpl3</name>
    <name type="ordered locus">Grc000101</name>
</gene>
<feature type="chain" id="PRO_0000077201" description="Large ribosomal subunit protein uL3c">
    <location>
        <begin position="1"/>
        <end position="205"/>
    </location>
</feature>
<feature type="region of interest" description="Disordered" evidence="2">
    <location>
        <begin position="130"/>
        <end position="150"/>
    </location>
</feature>
<geneLocation type="chloroplast"/>
<proteinExistence type="inferred from homology"/>
<protein>
    <recommendedName>
        <fullName evidence="3">Large ribosomal subunit protein uL3c</fullName>
    </recommendedName>
    <alternativeName>
        <fullName>50S ribosomal protein L3, chloroplastic</fullName>
    </alternativeName>
</protein>
<name>RK3_GRATL</name>
<accession>Q6B8V3</accession>
<dbReference type="EMBL" id="AY673996">
    <property type="protein sequence ID" value="AAT79682.1"/>
    <property type="molecule type" value="Genomic_DNA"/>
</dbReference>
<dbReference type="RefSeq" id="YP_063607.1">
    <property type="nucleotide sequence ID" value="NC_006137.1"/>
</dbReference>
<dbReference type="SMR" id="Q6B8V3"/>
<dbReference type="GeneID" id="2944088"/>
<dbReference type="GO" id="GO:0009507">
    <property type="term" value="C:chloroplast"/>
    <property type="evidence" value="ECO:0007669"/>
    <property type="project" value="UniProtKB-SubCell"/>
</dbReference>
<dbReference type="GO" id="GO:0022625">
    <property type="term" value="C:cytosolic large ribosomal subunit"/>
    <property type="evidence" value="ECO:0007669"/>
    <property type="project" value="TreeGrafter"/>
</dbReference>
<dbReference type="GO" id="GO:0019843">
    <property type="term" value="F:rRNA binding"/>
    <property type="evidence" value="ECO:0007669"/>
    <property type="project" value="UniProtKB-UniRule"/>
</dbReference>
<dbReference type="GO" id="GO:0003735">
    <property type="term" value="F:structural constituent of ribosome"/>
    <property type="evidence" value="ECO:0007669"/>
    <property type="project" value="InterPro"/>
</dbReference>
<dbReference type="GO" id="GO:0006412">
    <property type="term" value="P:translation"/>
    <property type="evidence" value="ECO:0007669"/>
    <property type="project" value="UniProtKB-UniRule"/>
</dbReference>
<dbReference type="FunFam" id="2.40.30.10:FF:000065">
    <property type="entry name" value="50S ribosomal protein L3, chloroplastic"/>
    <property type="match status" value="1"/>
</dbReference>
<dbReference type="Gene3D" id="3.30.160.810">
    <property type="match status" value="1"/>
</dbReference>
<dbReference type="Gene3D" id="2.40.30.10">
    <property type="entry name" value="Translation factors"/>
    <property type="match status" value="1"/>
</dbReference>
<dbReference type="HAMAP" id="MF_01325_B">
    <property type="entry name" value="Ribosomal_uL3_B"/>
    <property type="match status" value="1"/>
</dbReference>
<dbReference type="InterPro" id="IPR000597">
    <property type="entry name" value="Ribosomal_uL3"/>
</dbReference>
<dbReference type="InterPro" id="IPR019927">
    <property type="entry name" value="Ribosomal_uL3_bac/org-type"/>
</dbReference>
<dbReference type="InterPro" id="IPR009000">
    <property type="entry name" value="Transl_B-barrel_sf"/>
</dbReference>
<dbReference type="NCBIfam" id="TIGR03625">
    <property type="entry name" value="L3_bact"/>
    <property type="match status" value="1"/>
</dbReference>
<dbReference type="PANTHER" id="PTHR11229">
    <property type="entry name" value="50S RIBOSOMAL PROTEIN L3"/>
    <property type="match status" value="1"/>
</dbReference>
<dbReference type="PANTHER" id="PTHR11229:SF16">
    <property type="entry name" value="LARGE RIBOSOMAL SUBUNIT PROTEIN UL3C"/>
    <property type="match status" value="1"/>
</dbReference>
<dbReference type="Pfam" id="PF00297">
    <property type="entry name" value="Ribosomal_L3"/>
    <property type="match status" value="1"/>
</dbReference>
<dbReference type="SUPFAM" id="SSF50447">
    <property type="entry name" value="Translation proteins"/>
    <property type="match status" value="1"/>
</dbReference>